<comment type="function">
    <text evidence="2 3">Cytokine that plays a major role in the development of inflammatory and protective immune responses to microbial invaders and parasites by modulating immune cells of both the innate and adaptive immune systems. Stimulates the proliferation of natural killer cells, T-cells and B-cells and promotes the secretion of several cytokines. In monocytes, induces the production of IL8 and monocyte chemotactic protein 1/CCL2, two chemokines that attract neutrophils and monocytes respectively to sites of infection. Unlike most cytokines, which are secreted in soluble form, IL15 is expressed in association with its high affinity IL15RA on the surface of IL15-producing cells and delivers signals to target cells that express IL2RB and IL2RG receptor subunits. Binding to its receptor triggers the phosphorylation of JAK1 and JAK3 and the recruitment and subsequent phosphorylation of signal transducer and activator of transcription-3/STAT3 and STAT5 (By similarity). In mast cells, induces the rapid tyrosine phosphorylation of STAT6 and thereby controls mast cell survival and release of cytokines such as IL4 (By similarity).</text>
</comment>
<comment type="subcellular location">
    <subcellularLocation>
        <location>Secreted</location>
    </subcellularLocation>
</comment>
<comment type="similarity">
    <text evidence="5">Belongs to the IL-15/IL-21 family.</text>
</comment>
<organism>
    <name type="scientific">Macaca thibetana</name>
    <name type="common">Pere David's macaque</name>
    <name type="synonym">Tibetan macaque</name>
    <dbReference type="NCBI Taxonomy" id="54602"/>
    <lineage>
        <taxon>Eukaryota</taxon>
        <taxon>Metazoa</taxon>
        <taxon>Chordata</taxon>
        <taxon>Craniata</taxon>
        <taxon>Vertebrata</taxon>
        <taxon>Euteleostomi</taxon>
        <taxon>Mammalia</taxon>
        <taxon>Eutheria</taxon>
        <taxon>Euarchontoglires</taxon>
        <taxon>Primates</taxon>
        <taxon>Haplorrhini</taxon>
        <taxon>Catarrhini</taxon>
        <taxon>Cercopithecidae</taxon>
        <taxon>Cercopithecinae</taxon>
        <taxon>Macaca</taxon>
    </lineage>
</organism>
<proteinExistence type="evidence at transcript level"/>
<sequence length="162" mass="18164">MRISKPHLRSVSIQCYLCLLLNSHFLTEAGIHVFILGCFSAGLPKTEANWVNVISDLKKIEDLIQSMHIDATLYTESDVHPSCKVTAMKCFLLELQVISHESGDTDIHDTVENLIILANNILSSNGNITESGCKECEELEEKNIKEFLQSFVHIVQMFINAS</sequence>
<keyword id="KW-0202">Cytokine</keyword>
<keyword id="KW-1015">Disulfide bond</keyword>
<keyword id="KW-0325">Glycoprotein</keyword>
<keyword id="KW-0964">Secreted</keyword>
<keyword id="KW-0732">Signal</keyword>
<gene>
    <name type="primary">IL15</name>
</gene>
<evidence type="ECO:0000250" key="1"/>
<evidence type="ECO:0000250" key="2">
    <source>
        <dbReference type="UniProtKB" id="P40933"/>
    </source>
</evidence>
<evidence type="ECO:0000250" key="3">
    <source>
        <dbReference type="UniProtKB" id="P48346"/>
    </source>
</evidence>
<evidence type="ECO:0000255" key="4"/>
<evidence type="ECO:0000305" key="5"/>
<protein>
    <recommendedName>
        <fullName>Interleukin-15</fullName>
        <shortName>IL-15</shortName>
    </recommendedName>
</protein>
<feature type="signal peptide" evidence="4">
    <location>
        <begin position="1"/>
        <end position="29"/>
    </location>
</feature>
<feature type="propeptide" id="PRO_0000233185" evidence="4">
    <location>
        <begin position="30"/>
        <end position="48"/>
    </location>
</feature>
<feature type="chain" id="PRO_0000233186" description="Interleukin-15">
    <location>
        <begin position="49"/>
        <end position="162"/>
    </location>
</feature>
<feature type="glycosylation site" description="N-linked (GlcNAc...) asparagine" evidence="4">
    <location>
        <position position="127"/>
    </location>
</feature>
<feature type="disulfide bond" evidence="1">
    <location>
        <begin position="83"/>
        <end position="133"/>
    </location>
</feature>
<feature type="disulfide bond" evidence="1">
    <location>
        <begin position="90"/>
        <end position="136"/>
    </location>
</feature>
<dbReference type="EMBL" id="DQ021912">
    <property type="protein sequence ID" value="AAY45895.1"/>
    <property type="molecule type" value="mRNA"/>
</dbReference>
<dbReference type="SMR" id="Q4U0U2"/>
<dbReference type="GlyCosmos" id="Q4U0U2">
    <property type="glycosylation" value="1 site, No reported glycans"/>
</dbReference>
<dbReference type="GO" id="GO:0005615">
    <property type="term" value="C:extracellular space"/>
    <property type="evidence" value="ECO:0007669"/>
    <property type="project" value="UniProtKB-KW"/>
</dbReference>
<dbReference type="GO" id="GO:0005125">
    <property type="term" value="F:cytokine activity"/>
    <property type="evidence" value="ECO:0007669"/>
    <property type="project" value="UniProtKB-KW"/>
</dbReference>
<dbReference type="GO" id="GO:0005126">
    <property type="term" value="F:cytokine receptor binding"/>
    <property type="evidence" value="ECO:0007669"/>
    <property type="project" value="InterPro"/>
</dbReference>
<dbReference type="GO" id="GO:0006955">
    <property type="term" value="P:immune response"/>
    <property type="evidence" value="ECO:0007669"/>
    <property type="project" value="InterPro"/>
</dbReference>
<dbReference type="GO" id="GO:0035723">
    <property type="term" value="P:interleukin-15-mediated signaling pathway"/>
    <property type="evidence" value="ECO:0000250"/>
    <property type="project" value="UniProtKB"/>
</dbReference>
<dbReference type="GO" id="GO:0042119">
    <property type="term" value="P:neutrophil activation"/>
    <property type="evidence" value="ECO:0000250"/>
    <property type="project" value="UniProtKB"/>
</dbReference>
<dbReference type="GO" id="GO:0001819">
    <property type="term" value="P:positive regulation of cytokine production"/>
    <property type="evidence" value="ECO:0007669"/>
    <property type="project" value="TreeGrafter"/>
</dbReference>
<dbReference type="GO" id="GO:0050778">
    <property type="term" value="P:positive regulation of immune response"/>
    <property type="evidence" value="ECO:0007669"/>
    <property type="project" value="TreeGrafter"/>
</dbReference>
<dbReference type="GO" id="GO:0050731">
    <property type="term" value="P:positive regulation of peptidyl-tyrosine phosphorylation"/>
    <property type="evidence" value="ECO:0000250"/>
    <property type="project" value="UniProtKB"/>
</dbReference>
<dbReference type="GO" id="GO:0050766">
    <property type="term" value="P:positive regulation of phagocytosis"/>
    <property type="evidence" value="ECO:0000250"/>
    <property type="project" value="UniProtKB"/>
</dbReference>
<dbReference type="GO" id="GO:0042102">
    <property type="term" value="P:positive regulation of T cell proliferation"/>
    <property type="evidence" value="ECO:0007669"/>
    <property type="project" value="TreeGrafter"/>
</dbReference>
<dbReference type="FunFam" id="1.20.1250.70:FF:000001">
    <property type="entry name" value="Interleukin"/>
    <property type="match status" value="1"/>
</dbReference>
<dbReference type="Gene3D" id="1.20.1250.70">
    <property type="entry name" value="Interleukin-15/Interleukin-21"/>
    <property type="match status" value="1"/>
</dbReference>
<dbReference type="InterPro" id="IPR009079">
    <property type="entry name" value="4_helix_cytokine-like_core"/>
</dbReference>
<dbReference type="InterPro" id="IPR020439">
    <property type="entry name" value="IL-15"/>
</dbReference>
<dbReference type="InterPro" id="IPR003443">
    <property type="entry name" value="IL-15/IL-21_fam"/>
</dbReference>
<dbReference type="InterPro" id="IPR020466">
    <property type="entry name" value="IL-15_mml"/>
</dbReference>
<dbReference type="PANTHER" id="PTHR14356:SF3">
    <property type="entry name" value="INTERLEUKIN-15"/>
    <property type="match status" value="1"/>
</dbReference>
<dbReference type="PANTHER" id="PTHR14356">
    <property type="entry name" value="INTERLEUKIN-15-RELATED"/>
    <property type="match status" value="1"/>
</dbReference>
<dbReference type="Pfam" id="PF02372">
    <property type="entry name" value="IL15"/>
    <property type="match status" value="1"/>
</dbReference>
<dbReference type="PRINTS" id="PR01947">
    <property type="entry name" value="INTLKN15MAML"/>
</dbReference>
<dbReference type="PRINTS" id="PR01930">
    <property type="entry name" value="INTRLEUKIN15"/>
</dbReference>
<dbReference type="SUPFAM" id="SSF47266">
    <property type="entry name" value="4-helical cytokines"/>
    <property type="match status" value="1"/>
</dbReference>
<accession>Q4U0U2</accession>
<reference key="1">
    <citation type="submission" date="2005-04" db="EMBL/GenBank/DDBJ databases">
        <title>Molecular cloning and characterization of the interleukin 15 (IL15) gene from Tibetan macaque (Macaca thibetana) and its expression in Escherichia coli.</title>
        <authorList>
            <person name="Liang X."/>
            <person name="Wei K."/>
            <person name="Zou F.D."/>
            <person name="Yue B.S."/>
        </authorList>
    </citation>
    <scope>NUCLEOTIDE SEQUENCE [MRNA]</scope>
</reference>
<name>IL15_MACTH</name>